<sequence length="207" mass="24115">MNVARFLVEKHTLHVIIDFILSKVSNQQSNLAQHQRVYTGEKPYKCNEWGKALSGKSSLFYHQAIHGVGKLCKCNDCHKVFSNATTIANHWRIHNEDRSYKCNKCGKIFRHRSYLAVYQRTHTGEKPYKYHDCGKVFSQASSYAKHRRIHTGEKPHKCDDCGKVLTSRSHLIRHQRIHTGQKSYKCLKCGKVFSLWALHAEHQKIHF</sequence>
<gene>
    <name type="primary">ZNF137P</name>
    <name type="synonym">ZNF137</name>
</gene>
<dbReference type="EMBL" id="U09414">
    <property type="protein sequence ID" value="AAC50255.1"/>
    <property type="molecule type" value="mRNA"/>
</dbReference>
<dbReference type="EMBL" id="AC022150">
    <property type="status" value="NOT_ANNOTATED_CDS"/>
    <property type="molecule type" value="Genomic_DNA"/>
</dbReference>
<dbReference type="EMBL" id="BC110456">
    <property type="status" value="NOT_ANNOTATED_CDS"/>
    <property type="molecule type" value="mRNA"/>
</dbReference>
<dbReference type="PIR" id="I38602">
    <property type="entry name" value="I38602"/>
</dbReference>
<dbReference type="SMR" id="P52743"/>
<dbReference type="iPTMnet" id="P52743"/>
<dbReference type="PhosphoSitePlus" id="P52743"/>
<dbReference type="BioMuta" id="HGNC:12921"/>
<dbReference type="DMDM" id="1731413"/>
<dbReference type="jPOST" id="P52743"/>
<dbReference type="MassIVE" id="P52743"/>
<dbReference type="PeptideAtlas" id="P52743"/>
<dbReference type="ProteomicsDB" id="56519"/>
<dbReference type="AGR" id="HGNC:12921"/>
<dbReference type="GeneCards" id="ZNF137P"/>
<dbReference type="HGNC" id="HGNC:12921">
    <property type="gene designation" value="ZNF137P"/>
</dbReference>
<dbReference type="MIM" id="604079">
    <property type="type" value="gene"/>
</dbReference>
<dbReference type="neXtProt" id="NX_P52743"/>
<dbReference type="InParanoid" id="P52743"/>
<dbReference type="PAN-GO" id="P52743">
    <property type="GO annotations" value="0 GO annotations based on evolutionary models"/>
</dbReference>
<dbReference type="PhylomeDB" id="P52743"/>
<dbReference type="PathwayCommons" id="P52743"/>
<dbReference type="Pharos" id="P52743">
    <property type="development level" value="Tdark"/>
</dbReference>
<dbReference type="PRO" id="PR:P52743"/>
<dbReference type="Proteomes" id="UP000005640">
    <property type="component" value="Unplaced"/>
</dbReference>
<dbReference type="RNAct" id="P52743">
    <property type="molecule type" value="protein"/>
</dbReference>
<dbReference type="GO" id="GO:0005634">
    <property type="term" value="C:nucleus"/>
    <property type="evidence" value="ECO:0000318"/>
    <property type="project" value="GO_Central"/>
</dbReference>
<dbReference type="GO" id="GO:0000981">
    <property type="term" value="F:DNA-binding transcription factor activity, RNA polymerase II-specific"/>
    <property type="evidence" value="ECO:0000318"/>
    <property type="project" value="GO_Central"/>
</dbReference>
<dbReference type="GO" id="GO:0000978">
    <property type="term" value="F:RNA polymerase II cis-regulatory region sequence-specific DNA binding"/>
    <property type="evidence" value="ECO:0000318"/>
    <property type="project" value="GO_Central"/>
</dbReference>
<dbReference type="GO" id="GO:0008270">
    <property type="term" value="F:zinc ion binding"/>
    <property type="evidence" value="ECO:0007669"/>
    <property type="project" value="UniProtKB-KW"/>
</dbReference>
<dbReference type="GO" id="GO:0006357">
    <property type="term" value="P:regulation of transcription by RNA polymerase II"/>
    <property type="evidence" value="ECO:0000318"/>
    <property type="project" value="GO_Central"/>
</dbReference>
<dbReference type="FunFam" id="3.30.160.60:FF:005076">
    <property type="match status" value="1"/>
</dbReference>
<dbReference type="FunFam" id="3.30.160.60:FF:002737">
    <property type="entry name" value="AGAP008430-PA"/>
    <property type="match status" value="1"/>
</dbReference>
<dbReference type="FunFam" id="3.30.160.60:FF:000016">
    <property type="entry name" value="zinc finger protein 37 homolog"/>
    <property type="match status" value="1"/>
</dbReference>
<dbReference type="FunFam" id="3.30.160.60:FF:001498">
    <property type="entry name" value="Zinc finger protein 404"/>
    <property type="match status" value="1"/>
</dbReference>
<dbReference type="FunFam" id="3.30.160.60:FF:002107">
    <property type="entry name" value="Zinc finger protein 484"/>
    <property type="match status" value="1"/>
</dbReference>
<dbReference type="FunFam" id="3.30.160.60:FF:001270">
    <property type="entry name" value="zinc finger protein 583 isoform X1"/>
    <property type="match status" value="1"/>
</dbReference>
<dbReference type="FunFam" id="3.30.160.60:FF:003261">
    <property type="entry name" value="Zinc finger protein 860"/>
    <property type="match status" value="1"/>
</dbReference>
<dbReference type="Gene3D" id="3.30.160.60">
    <property type="entry name" value="Classic Zinc Finger"/>
    <property type="match status" value="7"/>
</dbReference>
<dbReference type="InterPro" id="IPR050826">
    <property type="entry name" value="Krueppel_C2H2_ZnFinger"/>
</dbReference>
<dbReference type="InterPro" id="IPR036236">
    <property type="entry name" value="Znf_C2H2_sf"/>
</dbReference>
<dbReference type="InterPro" id="IPR013087">
    <property type="entry name" value="Znf_C2H2_type"/>
</dbReference>
<dbReference type="PANTHER" id="PTHR24377">
    <property type="entry name" value="IP01015P-RELATED"/>
    <property type="match status" value="1"/>
</dbReference>
<dbReference type="Pfam" id="PF00096">
    <property type="entry name" value="zf-C2H2"/>
    <property type="match status" value="4"/>
</dbReference>
<dbReference type="SMART" id="SM00355">
    <property type="entry name" value="ZnF_C2H2"/>
    <property type="match status" value="6"/>
</dbReference>
<dbReference type="SUPFAM" id="SSF57667">
    <property type="entry name" value="beta-beta-alpha zinc fingers"/>
    <property type="match status" value="3"/>
</dbReference>
<dbReference type="PROSITE" id="PS00028">
    <property type="entry name" value="ZINC_FINGER_C2H2_1"/>
    <property type="match status" value="3"/>
</dbReference>
<dbReference type="PROSITE" id="PS50157">
    <property type="entry name" value="ZINC_FINGER_C2H2_2"/>
    <property type="match status" value="4"/>
</dbReference>
<comment type="function">
    <text>May be involved in transcriptional regulation.</text>
</comment>
<comment type="subcellular location">
    <subcellularLocation>
        <location evidence="2">Nucleus</location>
    </subcellularLocation>
</comment>
<comment type="similarity">
    <text evidence="2">Belongs to the krueppel C2H2-type zinc-finger protein family.</text>
</comment>
<comment type="caution">
    <text evidence="2">Product of a dubious CDS prediction. May be produced at very low levels due to a premature stop codon in the mRNA, leading to nonsense-mediated mRNA decay.</text>
</comment>
<organism>
    <name type="scientific">Homo sapiens</name>
    <name type="common">Human</name>
    <dbReference type="NCBI Taxonomy" id="9606"/>
    <lineage>
        <taxon>Eukaryota</taxon>
        <taxon>Metazoa</taxon>
        <taxon>Chordata</taxon>
        <taxon>Craniata</taxon>
        <taxon>Vertebrata</taxon>
        <taxon>Euteleostomi</taxon>
        <taxon>Mammalia</taxon>
        <taxon>Eutheria</taxon>
        <taxon>Euarchontoglires</taxon>
        <taxon>Primates</taxon>
        <taxon>Haplorrhini</taxon>
        <taxon>Catarrhini</taxon>
        <taxon>Hominidae</taxon>
        <taxon>Homo</taxon>
    </lineage>
</organism>
<accession>P52743</accession>
<accession>Q2TBC7</accession>
<name>ZN137_HUMAN</name>
<keyword id="KW-0238">DNA-binding</keyword>
<keyword id="KW-0479">Metal-binding</keyword>
<keyword id="KW-0539">Nucleus</keyword>
<keyword id="KW-1185">Reference proteome</keyword>
<keyword id="KW-0677">Repeat</keyword>
<keyword id="KW-0804">Transcription</keyword>
<keyword id="KW-0805">Transcription regulation</keyword>
<keyword id="KW-0862">Zinc</keyword>
<keyword id="KW-0863">Zinc-finger</keyword>
<evidence type="ECO:0000255" key="1">
    <source>
        <dbReference type="PROSITE-ProRule" id="PRU00042"/>
    </source>
</evidence>
<evidence type="ECO:0000305" key="2"/>
<proteinExistence type="uncertain"/>
<reference key="1">
    <citation type="journal article" date="1995" name="Genomics">
        <title>Isolation and fine mapping of 16 novel human zinc finger-encoding cDNAs identify putative candidate genes for developmental and malignant disorders.</title>
        <authorList>
            <person name="Tommerup N."/>
            <person name="Vissing H."/>
        </authorList>
    </citation>
    <scope>NUCLEOTIDE SEQUENCE [MRNA]</scope>
    <source>
        <tissue>Insulinoma</tissue>
    </source>
</reference>
<reference key="2">
    <citation type="journal article" date="2004" name="Nature">
        <title>The DNA sequence and biology of human chromosome 19.</title>
        <authorList>
            <person name="Grimwood J."/>
            <person name="Gordon L.A."/>
            <person name="Olsen A.S."/>
            <person name="Terry A."/>
            <person name="Schmutz J."/>
            <person name="Lamerdin J.E."/>
            <person name="Hellsten U."/>
            <person name="Goodstein D."/>
            <person name="Couronne O."/>
            <person name="Tran-Gyamfi M."/>
            <person name="Aerts A."/>
            <person name="Altherr M."/>
            <person name="Ashworth L."/>
            <person name="Bajorek E."/>
            <person name="Black S."/>
            <person name="Branscomb E."/>
            <person name="Caenepeel S."/>
            <person name="Carrano A.V."/>
            <person name="Caoile C."/>
            <person name="Chan Y.M."/>
            <person name="Christensen M."/>
            <person name="Cleland C.A."/>
            <person name="Copeland A."/>
            <person name="Dalin E."/>
            <person name="Dehal P."/>
            <person name="Denys M."/>
            <person name="Detter J.C."/>
            <person name="Escobar J."/>
            <person name="Flowers D."/>
            <person name="Fotopulos D."/>
            <person name="Garcia C."/>
            <person name="Georgescu A.M."/>
            <person name="Glavina T."/>
            <person name="Gomez M."/>
            <person name="Gonzales E."/>
            <person name="Groza M."/>
            <person name="Hammon N."/>
            <person name="Hawkins T."/>
            <person name="Haydu L."/>
            <person name="Ho I."/>
            <person name="Huang W."/>
            <person name="Israni S."/>
            <person name="Jett J."/>
            <person name="Kadner K."/>
            <person name="Kimball H."/>
            <person name="Kobayashi A."/>
            <person name="Larionov V."/>
            <person name="Leem S.-H."/>
            <person name="Lopez F."/>
            <person name="Lou Y."/>
            <person name="Lowry S."/>
            <person name="Malfatti S."/>
            <person name="Martinez D."/>
            <person name="McCready P.M."/>
            <person name="Medina C."/>
            <person name="Morgan J."/>
            <person name="Nelson K."/>
            <person name="Nolan M."/>
            <person name="Ovcharenko I."/>
            <person name="Pitluck S."/>
            <person name="Pollard M."/>
            <person name="Popkie A.P."/>
            <person name="Predki P."/>
            <person name="Quan G."/>
            <person name="Ramirez L."/>
            <person name="Rash S."/>
            <person name="Retterer J."/>
            <person name="Rodriguez A."/>
            <person name="Rogers S."/>
            <person name="Salamov A."/>
            <person name="Salazar A."/>
            <person name="She X."/>
            <person name="Smith D."/>
            <person name="Slezak T."/>
            <person name="Solovyev V."/>
            <person name="Thayer N."/>
            <person name="Tice H."/>
            <person name="Tsai M."/>
            <person name="Ustaszewska A."/>
            <person name="Vo N."/>
            <person name="Wagner M."/>
            <person name="Wheeler J."/>
            <person name="Wu K."/>
            <person name="Xie G."/>
            <person name="Yang J."/>
            <person name="Dubchak I."/>
            <person name="Furey T.S."/>
            <person name="DeJong P."/>
            <person name="Dickson M."/>
            <person name="Gordon D."/>
            <person name="Eichler E.E."/>
            <person name="Pennacchio L.A."/>
            <person name="Richardson P."/>
            <person name="Stubbs L."/>
            <person name="Rokhsar D.S."/>
            <person name="Myers R.M."/>
            <person name="Rubin E.M."/>
            <person name="Lucas S.M."/>
        </authorList>
    </citation>
    <scope>NUCLEOTIDE SEQUENCE [LARGE SCALE GENOMIC DNA]</scope>
</reference>
<reference key="3">
    <citation type="journal article" date="2004" name="Genome Res.">
        <title>The status, quality, and expansion of the NIH full-length cDNA project: the Mammalian Gene Collection (MGC).</title>
        <authorList>
            <consortium name="The MGC Project Team"/>
        </authorList>
    </citation>
    <scope>NUCLEOTIDE SEQUENCE [LARGE SCALE MRNA]</scope>
</reference>
<feature type="chain" id="PRO_0000047421" description="Putative zinc finger protein 137">
    <location>
        <begin position="1"/>
        <end position="207"/>
    </location>
</feature>
<feature type="zinc finger region" description="C2H2-type 1" evidence="1">
    <location>
        <begin position="72"/>
        <end position="94"/>
    </location>
</feature>
<feature type="zinc finger region" description="C2H2-type 2; degenerate" evidence="1">
    <location>
        <begin position="100"/>
        <end position="122"/>
    </location>
</feature>
<feature type="zinc finger region" description="C2H2-type 3; degenerate" evidence="1">
    <location>
        <begin position="128"/>
        <end position="150"/>
    </location>
</feature>
<feature type="zinc finger region" description="C2H2-type 4" evidence="1">
    <location>
        <begin position="156"/>
        <end position="178"/>
    </location>
</feature>
<feature type="zinc finger region" description="C2H2-type 5" evidence="1">
    <location>
        <begin position="184"/>
        <end position="206"/>
    </location>
</feature>
<feature type="sequence variant" id="VAR_033556" description="In dbSNP:rs7250969.">
    <original>R</original>
    <variation>Q</variation>
    <location>
        <position position="112"/>
    </location>
</feature>
<feature type="sequence variant" id="VAR_012025" description="In dbSNP:rs1802617.">
    <original>Q</original>
    <variation>H</variation>
    <location>
        <position position="181"/>
    </location>
</feature>
<protein>
    <recommendedName>
        <fullName>Putative zinc finger protein 137</fullName>
    </recommendedName>
    <alternativeName>
        <fullName>Zinc finger protein 137 pseudogene</fullName>
    </alternativeName>
</protein>